<accession>B2UEL3</accession>
<name>RS3_RALPJ</name>
<evidence type="ECO:0000255" key="1">
    <source>
        <dbReference type="HAMAP-Rule" id="MF_01309"/>
    </source>
</evidence>
<evidence type="ECO:0000256" key="2">
    <source>
        <dbReference type="SAM" id="MobiDB-lite"/>
    </source>
</evidence>
<evidence type="ECO:0000305" key="3"/>
<dbReference type="EMBL" id="CP001068">
    <property type="protein sequence ID" value="ACD28413.1"/>
    <property type="molecule type" value="Genomic_DNA"/>
</dbReference>
<dbReference type="SMR" id="B2UEL3"/>
<dbReference type="STRING" id="402626.Rpic_3291"/>
<dbReference type="KEGG" id="rpi:Rpic_3291"/>
<dbReference type="eggNOG" id="COG0092">
    <property type="taxonomic scope" value="Bacteria"/>
</dbReference>
<dbReference type="HOGENOM" id="CLU_058591_0_2_4"/>
<dbReference type="GO" id="GO:0022627">
    <property type="term" value="C:cytosolic small ribosomal subunit"/>
    <property type="evidence" value="ECO:0007669"/>
    <property type="project" value="TreeGrafter"/>
</dbReference>
<dbReference type="GO" id="GO:0003729">
    <property type="term" value="F:mRNA binding"/>
    <property type="evidence" value="ECO:0007669"/>
    <property type="project" value="UniProtKB-UniRule"/>
</dbReference>
<dbReference type="GO" id="GO:0019843">
    <property type="term" value="F:rRNA binding"/>
    <property type="evidence" value="ECO:0007669"/>
    <property type="project" value="UniProtKB-UniRule"/>
</dbReference>
<dbReference type="GO" id="GO:0003735">
    <property type="term" value="F:structural constituent of ribosome"/>
    <property type="evidence" value="ECO:0007669"/>
    <property type="project" value="InterPro"/>
</dbReference>
<dbReference type="GO" id="GO:0006412">
    <property type="term" value="P:translation"/>
    <property type="evidence" value="ECO:0007669"/>
    <property type="project" value="UniProtKB-UniRule"/>
</dbReference>
<dbReference type="CDD" id="cd02412">
    <property type="entry name" value="KH-II_30S_S3"/>
    <property type="match status" value="1"/>
</dbReference>
<dbReference type="FunFam" id="3.30.1140.32:FF:000006">
    <property type="entry name" value="30S ribosomal protein S3"/>
    <property type="match status" value="1"/>
</dbReference>
<dbReference type="FunFam" id="3.30.300.20:FF:000001">
    <property type="entry name" value="30S ribosomal protein S3"/>
    <property type="match status" value="1"/>
</dbReference>
<dbReference type="Gene3D" id="3.30.300.20">
    <property type="match status" value="1"/>
</dbReference>
<dbReference type="Gene3D" id="3.30.1140.32">
    <property type="entry name" value="Ribosomal protein S3, C-terminal domain"/>
    <property type="match status" value="1"/>
</dbReference>
<dbReference type="HAMAP" id="MF_01309_B">
    <property type="entry name" value="Ribosomal_uS3_B"/>
    <property type="match status" value="1"/>
</dbReference>
<dbReference type="InterPro" id="IPR004087">
    <property type="entry name" value="KH_dom"/>
</dbReference>
<dbReference type="InterPro" id="IPR015946">
    <property type="entry name" value="KH_dom-like_a/b"/>
</dbReference>
<dbReference type="InterPro" id="IPR004044">
    <property type="entry name" value="KH_dom_type_2"/>
</dbReference>
<dbReference type="InterPro" id="IPR009019">
    <property type="entry name" value="KH_sf_prok-type"/>
</dbReference>
<dbReference type="InterPro" id="IPR036419">
    <property type="entry name" value="Ribosomal_S3_C_sf"/>
</dbReference>
<dbReference type="InterPro" id="IPR005704">
    <property type="entry name" value="Ribosomal_uS3_bac-typ"/>
</dbReference>
<dbReference type="InterPro" id="IPR001351">
    <property type="entry name" value="Ribosomal_uS3_C"/>
</dbReference>
<dbReference type="InterPro" id="IPR018280">
    <property type="entry name" value="Ribosomal_uS3_CS"/>
</dbReference>
<dbReference type="NCBIfam" id="TIGR01009">
    <property type="entry name" value="rpsC_bact"/>
    <property type="match status" value="1"/>
</dbReference>
<dbReference type="PANTHER" id="PTHR11760">
    <property type="entry name" value="30S/40S RIBOSOMAL PROTEIN S3"/>
    <property type="match status" value="1"/>
</dbReference>
<dbReference type="PANTHER" id="PTHR11760:SF19">
    <property type="entry name" value="SMALL RIBOSOMAL SUBUNIT PROTEIN US3C"/>
    <property type="match status" value="1"/>
</dbReference>
<dbReference type="Pfam" id="PF07650">
    <property type="entry name" value="KH_2"/>
    <property type="match status" value="1"/>
</dbReference>
<dbReference type="Pfam" id="PF00189">
    <property type="entry name" value="Ribosomal_S3_C"/>
    <property type="match status" value="1"/>
</dbReference>
<dbReference type="SMART" id="SM00322">
    <property type="entry name" value="KH"/>
    <property type="match status" value="1"/>
</dbReference>
<dbReference type="SUPFAM" id="SSF54814">
    <property type="entry name" value="Prokaryotic type KH domain (KH-domain type II)"/>
    <property type="match status" value="1"/>
</dbReference>
<dbReference type="SUPFAM" id="SSF54821">
    <property type="entry name" value="Ribosomal protein S3 C-terminal domain"/>
    <property type="match status" value="1"/>
</dbReference>
<dbReference type="PROSITE" id="PS50823">
    <property type="entry name" value="KH_TYPE_2"/>
    <property type="match status" value="1"/>
</dbReference>
<dbReference type="PROSITE" id="PS00548">
    <property type="entry name" value="RIBOSOMAL_S3"/>
    <property type="match status" value="1"/>
</dbReference>
<comment type="function">
    <text evidence="1">Binds the lower part of the 30S subunit head. Binds mRNA in the 70S ribosome, positioning it for translation.</text>
</comment>
<comment type="subunit">
    <text evidence="1">Part of the 30S ribosomal subunit. Forms a tight complex with proteins S10 and S14.</text>
</comment>
<comment type="similarity">
    <text evidence="1">Belongs to the universal ribosomal protein uS3 family.</text>
</comment>
<proteinExistence type="inferred from homology"/>
<keyword id="KW-0687">Ribonucleoprotein</keyword>
<keyword id="KW-0689">Ribosomal protein</keyword>
<keyword id="KW-0694">RNA-binding</keyword>
<keyword id="KW-0699">rRNA-binding</keyword>
<organism>
    <name type="scientific">Ralstonia pickettii (strain 12J)</name>
    <dbReference type="NCBI Taxonomy" id="402626"/>
    <lineage>
        <taxon>Bacteria</taxon>
        <taxon>Pseudomonadati</taxon>
        <taxon>Pseudomonadota</taxon>
        <taxon>Betaproteobacteria</taxon>
        <taxon>Burkholderiales</taxon>
        <taxon>Burkholderiaceae</taxon>
        <taxon>Ralstonia</taxon>
    </lineage>
</organism>
<reference key="1">
    <citation type="submission" date="2008-05" db="EMBL/GenBank/DDBJ databases">
        <title>Complete sequence of chromosome 1 of Ralstonia pickettii 12J.</title>
        <authorList>
            <person name="Lucas S."/>
            <person name="Copeland A."/>
            <person name="Lapidus A."/>
            <person name="Glavina del Rio T."/>
            <person name="Dalin E."/>
            <person name="Tice H."/>
            <person name="Bruce D."/>
            <person name="Goodwin L."/>
            <person name="Pitluck S."/>
            <person name="Meincke L."/>
            <person name="Brettin T."/>
            <person name="Detter J.C."/>
            <person name="Han C."/>
            <person name="Kuske C.R."/>
            <person name="Schmutz J."/>
            <person name="Larimer F."/>
            <person name="Land M."/>
            <person name="Hauser L."/>
            <person name="Kyrpides N."/>
            <person name="Mikhailova N."/>
            <person name="Marsh T."/>
            <person name="Richardson P."/>
        </authorList>
    </citation>
    <scope>NUCLEOTIDE SEQUENCE [LARGE SCALE GENOMIC DNA]</scope>
    <source>
        <strain>12J</strain>
    </source>
</reference>
<gene>
    <name evidence="1" type="primary">rpsC</name>
    <name type="ordered locus">Rpic_3291</name>
</gene>
<sequence>MGQKIHPTGFRLAVSRNWASRWYASNTQFAGMLKEDIEVREFLKKKLKNASVGRVVIERPAKNARITIYSSRPGVVIGKKGEDIELLKAELQRRMGVPVHVNIEEIRKPEVDAQLIADSITQQLERRIMFRRAMKRAMQNAMRLGAQGIKIMSSGRLNGIEIARTEWYREGRVPLHTLRADIDYGFSEAETTYGIIGVKVWVYKGDHLGRNDAPVVEEPQEERRKRPGRPEGRRREGEGRPAGQRRGAGAGARRGTDAKTGE</sequence>
<feature type="chain" id="PRO_1000141005" description="Small ribosomal subunit protein uS3">
    <location>
        <begin position="1"/>
        <end position="262"/>
    </location>
</feature>
<feature type="domain" description="KH type-2" evidence="1">
    <location>
        <begin position="39"/>
        <end position="107"/>
    </location>
</feature>
<feature type="region of interest" description="Disordered" evidence="2">
    <location>
        <begin position="211"/>
        <end position="262"/>
    </location>
</feature>
<feature type="compositionally biased region" description="Basic and acidic residues" evidence="2">
    <location>
        <begin position="221"/>
        <end position="239"/>
    </location>
</feature>
<protein>
    <recommendedName>
        <fullName evidence="1">Small ribosomal subunit protein uS3</fullName>
    </recommendedName>
    <alternativeName>
        <fullName evidence="3">30S ribosomal protein S3</fullName>
    </alternativeName>
</protein>